<accession>A1TZN2</accession>
<organism>
    <name type="scientific">Marinobacter nauticus (strain ATCC 700491 / DSM 11845 / VT8)</name>
    <name type="common">Marinobacter aquaeolei</name>
    <dbReference type="NCBI Taxonomy" id="351348"/>
    <lineage>
        <taxon>Bacteria</taxon>
        <taxon>Pseudomonadati</taxon>
        <taxon>Pseudomonadota</taxon>
        <taxon>Gammaproteobacteria</taxon>
        <taxon>Pseudomonadales</taxon>
        <taxon>Marinobacteraceae</taxon>
        <taxon>Marinobacter</taxon>
    </lineage>
</organism>
<protein>
    <recommendedName>
        <fullName evidence="1">Flagellar P-ring protein</fullName>
    </recommendedName>
    <alternativeName>
        <fullName evidence="1">Basal body P-ring protein</fullName>
    </alternativeName>
</protein>
<sequence>MSVRRFLVWILALTVGAAPVMADRLKDLSRIKGVRNNQLVGYGLVVGLDGTGDKAPFTNQTFRNMMNQFGITLPDGVNPKLANVAAVTVSATLPAFAKAGQELDITVSSIGNADSLRGGTLLMTPLKGADGQVYAMAQGSLVVGGFGAQGQDGSRITVNVPSVGRIPNGATIEREVESPFNRGDTITFNLLRSDFTTARRVVEAINGRLGPDMAYAHDATSISVRAPRDPSQRVSFLSILENIEVDPAQEAARVVINSRTGTIVVGQNVKVSPAAITHGNLTVTIQENPEVVQPNPLAQGDTAVQQNTQIAVTEDPARMFQFGPATTLNEIVQAVNQVGAAPGDVMAVLEALKQAGALRAELIVI</sequence>
<proteinExistence type="inferred from homology"/>
<comment type="function">
    <text evidence="1">Assembles around the rod to form the L-ring and probably protects the motor/basal body from shearing forces during rotation.</text>
</comment>
<comment type="subunit">
    <text evidence="1">The basal body constitutes a major portion of the flagellar organelle and consists of four rings (L,P,S, and M) mounted on a central rod.</text>
</comment>
<comment type="subcellular location">
    <subcellularLocation>
        <location evidence="1">Periplasm</location>
    </subcellularLocation>
    <subcellularLocation>
        <location evidence="1">Bacterial flagellum basal body</location>
    </subcellularLocation>
</comment>
<comment type="similarity">
    <text evidence="1">Belongs to the FlgI family.</text>
</comment>
<name>FLGI_MARN8</name>
<keyword id="KW-0975">Bacterial flagellum</keyword>
<keyword id="KW-0574">Periplasm</keyword>
<keyword id="KW-0732">Signal</keyword>
<gene>
    <name evidence="1" type="primary">flgI</name>
    <name type="ordered locus">Maqu_1109</name>
</gene>
<evidence type="ECO:0000255" key="1">
    <source>
        <dbReference type="HAMAP-Rule" id="MF_00416"/>
    </source>
</evidence>
<reference key="1">
    <citation type="journal article" date="2011" name="Appl. Environ. Microbiol.">
        <title>Genomic potential of Marinobacter aquaeolei, a biogeochemical 'opportunitroph'.</title>
        <authorList>
            <person name="Singer E."/>
            <person name="Webb E.A."/>
            <person name="Nelson W.C."/>
            <person name="Heidelberg J.F."/>
            <person name="Ivanova N."/>
            <person name="Pati A."/>
            <person name="Edwards K.J."/>
        </authorList>
    </citation>
    <scope>NUCLEOTIDE SEQUENCE [LARGE SCALE GENOMIC DNA]</scope>
    <source>
        <strain>ATCC 700491 / DSM 11845 / VT8</strain>
    </source>
</reference>
<feature type="signal peptide" evidence="1">
    <location>
        <begin position="1"/>
        <end position="22"/>
    </location>
</feature>
<feature type="chain" id="PRO_5000208906" description="Flagellar P-ring protein">
    <location>
        <begin position="23"/>
        <end position="365"/>
    </location>
</feature>
<dbReference type="EMBL" id="CP000514">
    <property type="protein sequence ID" value="ABM18201.1"/>
    <property type="molecule type" value="Genomic_DNA"/>
</dbReference>
<dbReference type="RefSeq" id="WP_011784618.1">
    <property type="nucleotide sequence ID" value="NC_008740.1"/>
</dbReference>
<dbReference type="SMR" id="A1TZN2"/>
<dbReference type="STRING" id="351348.Maqu_1109"/>
<dbReference type="KEGG" id="maq:Maqu_1109"/>
<dbReference type="eggNOG" id="COG1706">
    <property type="taxonomic scope" value="Bacteria"/>
</dbReference>
<dbReference type="HOGENOM" id="CLU_045235_1_0_6"/>
<dbReference type="OrthoDB" id="9786431at2"/>
<dbReference type="Proteomes" id="UP000000998">
    <property type="component" value="Chromosome"/>
</dbReference>
<dbReference type="GO" id="GO:0009428">
    <property type="term" value="C:bacterial-type flagellum basal body, distal rod, P ring"/>
    <property type="evidence" value="ECO:0007669"/>
    <property type="project" value="InterPro"/>
</dbReference>
<dbReference type="GO" id="GO:0030288">
    <property type="term" value="C:outer membrane-bounded periplasmic space"/>
    <property type="evidence" value="ECO:0007669"/>
    <property type="project" value="InterPro"/>
</dbReference>
<dbReference type="GO" id="GO:0005198">
    <property type="term" value="F:structural molecule activity"/>
    <property type="evidence" value="ECO:0007669"/>
    <property type="project" value="InterPro"/>
</dbReference>
<dbReference type="GO" id="GO:0071973">
    <property type="term" value="P:bacterial-type flagellum-dependent cell motility"/>
    <property type="evidence" value="ECO:0007669"/>
    <property type="project" value="InterPro"/>
</dbReference>
<dbReference type="HAMAP" id="MF_00416">
    <property type="entry name" value="FlgI"/>
    <property type="match status" value="1"/>
</dbReference>
<dbReference type="InterPro" id="IPR001782">
    <property type="entry name" value="Flag_FlgI"/>
</dbReference>
<dbReference type="NCBIfam" id="NF003676">
    <property type="entry name" value="PRK05303.1"/>
    <property type="match status" value="1"/>
</dbReference>
<dbReference type="PANTHER" id="PTHR30381">
    <property type="entry name" value="FLAGELLAR P-RING PERIPLASMIC PROTEIN FLGI"/>
    <property type="match status" value="1"/>
</dbReference>
<dbReference type="PANTHER" id="PTHR30381:SF0">
    <property type="entry name" value="FLAGELLAR P-RING PROTEIN"/>
    <property type="match status" value="1"/>
</dbReference>
<dbReference type="Pfam" id="PF02119">
    <property type="entry name" value="FlgI"/>
    <property type="match status" value="1"/>
</dbReference>
<dbReference type="PRINTS" id="PR01010">
    <property type="entry name" value="FLGPRINGFLGI"/>
</dbReference>